<accession>P23270</accession>
<sequence length="327" mass="36227">MERRNHSGRVSEFVLLGFPAPAPLRVLLFFLSLLAYVLVLTENMLIIIAIRNHPTLHKPMYFFLANMSFLEIWYVTVTIPKMLAGFIGSKENHGQLISFEACMTQLYFFLGLGCTECVLLAVMAYDRYVAICHPLHYPVIVSSRLCVQMAAGSWAGGFGISMVKVFLISRLSYCGPNTINHFFCDVSPLLNLSCTDMSTAELTDFVLAIFILLGPLSVTGASYMAITGAVMRIPSAAGRHKAFSTCASHLTVVIIFYAASIFIYARPKALSAFDTNKLVSVLYAVIVPLFNPIIYCLRNQDVKRALRRTLHLAQDQEANTNKGSKNG</sequence>
<comment type="function">
    <text evidence="3">Odorant receptor.</text>
</comment>
<comment type="subcellular location">
    <subcellularLocation>
        <location>Cell membrane</location>
        <topology>Multi-pass membrane protein</topology>
    </subcellularLocation>
</comment>
<comment type="tissue specificity">
    <text>Olfactory epithelium.</text>
</comment>
<comment type="similarity">
    <text evidence="2">Belongs to the G-protein coupled receptor 1 family.</text>
</comment>
<gene>
    <name type="primary">Olr226</name>
</gene>
<evidence type="ECO:0000255" key="1"/>
<evidence type="ECO:0000255" key="2">
    <source>
        <dbReference type="PROSITE-ProRule" id="PRU00521"/>
    </source>
</evidence>
<evidence type="ECO:0000305" key="3"/>
<keyword id="KW-1003">Cell membrane</keyword>
<keyword id="KW-1015">Disulfide bond</keyword>
<keyword id="KW-0297">G-protein coupled receptor</keyword>
<keyword id="KW-0325">Glycoprotein</keyword>
<keyword id="KW-0472">Membrane</keyword>
<keyword id="KW-0552">Olfaction</keyword>
<keyword id="KW-0675">Receptor</keyword>
<keyword id="KW-1185">Reference proteome</keyword>
<keyword id="KW-0716">Sensory transduction</keyword>
<keyword id="KW-0807">Transducer</keyword>
<keyword id="KW-0812">Transmembrane</keyword>
<keyword id="KW-1133">Transmembrane helix</keyword>
<organism>
    <name type="scientific">Rattus norvegicus</name>
    <name type="common">Rat</name>
    <dbReference type="NCBI Taxonomy" id="10116"/>
    <lineage>
        <taxon>Eukaryota</taxon>
        <taxon>Metazoa</taxon>
        <taxon>Chordata</taxon>
        <taxon>Craniata</taxon>
        <taxon>Vertebrata</taxon>
        <taxon>Euteleostomi</taxon>
        <taxon>Mammalia</taxon>
        <taxon>Eutheria</taxon>
        <taxon>Euarchontoglires</taxon>
        <taxon>Glires</taxon>
        <taxon>Rodentia</taxon>
        <taxon>Myomorpha</taxon>
        <taxon>Muroidea</taxon>
        <taxon>Muridae</taxon>
        <taxon>Murinae</taxon>
        <taxon>Rattus</taxon>
    </lineage>
</organism>
<protein>
    <recommendedName>
        <fullName>Olfactory receptor 226</fullName>
    </recommendedName>
    <alternativeName>
        <fullName>Olfactory receptor-like protein I7</fullName>
    </alternativeName>
</protein>
<name>OL226_RAT</name>
<reference key="1">
    <citation type="journal article" date="1991" name="Cell">
        <title>A novel multigene family may encode odorant receptors: a molecular basis for odor recognition.</title>
        <authorList>
            <person name="Buck L."/>
            <person name="Axel R."/>
        </authorList>
    </citation>
    <scope>NUCLEOTIDE SEQUENCE [MRNA]</scope>
</reference>
<reference key="2">
    <citation type="journal article" date="2004" name="Nature">
        <title>Genome sequence of the Brown Norway rat yields insights into mammalian evolution.</title>
        <authorList>
            <person name="Gibbs R.A."/>
            <person name="Weinstock G.M."/>
            <person name="Metzker M.L."/>
            <person name="Muzny D.M."/>
            <person name="Sodergren E.J."/>
            <person name="Scherer S."/>
            <person name="Scott G."/>
            <person name="Steffen D."/>
            <person name="Worley K.C."/>
            <person name="Burch P.E."/>
            <person name="Okwuonu G."/>
            <person name="Hines S."/>
            <person name="Lewis L."/>
            <person name="Deramo C."/>
            <person name="Delgado O."/>
            <person name="Dugan-Rocha S."/>
            <person name="Miner G."/>
            <person name="Morgan M."/>
            <person name="Hawes A."/>
            <person name="Gill R."/>
            <person name="Holt R.A."/>
            <person name="Adams M.D."/>
            <person name="Amanatides P.G."/>
            <person name="Baden-Tillson H."/>
            <person name="Barnstead M."/>
            <person name="Chin S."/>
            <person name="Evans C.A."/>
            <person name="Ferriera S."/>
            <person name="Fosler C."/>
            <person name="Glodek A."/>
            <person name="Gu Z."/>
            <person name="Jennings D."/>
            <person name="Kraft C.L."/>
            <person name="Nguyen T."/>
            <person name="Pfannkoch C.M."/>
            <person name="Sitter C."/>
            <person name="Sutton G.G."/>
            <person name="Venter J.C."/>
            <person name="Woodage T."/>
            <person name="Smith D."/>
            <person name="Lee H.-M."/>
            <person name="Gustafson E."/>
            <person name="Cahill P."/>
            <person name="Kana A."/>
            <person name="Doucette-Stamm L."/>
            <person name="Weinstock K."/>
            <person name="Fechtel K."/>
            <person name="Weiss R.B."/>
            <person name="Dunn D.M."/>
            <person name="Green E.D."/>
            <person name="Blakesley R.W."/>
            <person name="Bouffard G.G."/>
            <person name="De Jong P.J."/>
            <person name="Osoegawa K."/>
            <person name="Zhu B."/>
            <person name="Marra M."/>
            <person name="Schein J."/>
            <person name="Bosdet I."/>
            <person name="Fjell C."/>
            <person name="Jones S."/>
            <person name="Krzywinski M."/>
            <person name="Mathewson C."/>
            <person name="Siddiqui A."/>
            <person name="Wye N."/>
            <person name="McPherson J."/>
            <person name="Zhao S."/>
            <person name="Fraser C.M."/>
            <person name="Shetty J."/>
            <person name="Shatsman S."/>
            <person name="Geer K."/>
            <person name="Chen Y."/>
            <person name="Abramzon S."/>
            <person name="Nierman W.C."/>
            <person name="Havlak P.H."/>
            <person name="Chen R."/>
            <person name="Durbin K.J."/>
            <person name="Egan A."/>
            <person name="Ren Y."/>
            <person name="Song X.-Z."/>
            <person name="Li B."/>
            <person name="Liu Y."/>
            <person name="Qin X."/>
            <person name="Cawley S."/>
            <person name="Cooney A.J."/>
            <person name="D'Souza L.M."/>
            <person name="Martin K."/>
            <person name="Wu J.Q."/>
            <person name="Gonzalez-Garay M.L."/>
            <person name="Jackson A.R."/>
            <person name="Kalafus K.J."/>
            <person name="McLeod M.P."/>
            <person name="Milosavljevic A."/>
            <person name="Virk D."/>
            <person name="Volkov A."/>
            <person name="Wheeler D.A."/>
            <person name="Zhang Z."/>
            <person name="Bailey J.A."/>
            <person name="Eichler E.E."/>
            <person name="Tuzun E."/>
            <person name="Birney E."/>
            <person name="Mongin E."/>
            <person name="Ureta-Vidal A."/>
            <person name="Woodwark C."/>
            <person name="Zdobnov E."/>
            <person name="Bork P."/>
            <person name="Suyama M."/>
            <person name="Torrents D."/>
            <person name="Alexandersson M."/>
            <person name="Trask B.J."/>
            <person name="Young J.M."/>
            <person name="Huang H."/>
            <person name="Wang H."/>
            <person name="Xing H."/>
            <person name="Daniels S."/>
            <person name="Gietzen D."/>
            <person name="Schmidt J."/>
            <person name="Stevens K."/>
            <person name="Vitt U."/>
            <person name="Wingrove J."/>
            <person name="Camara F."/>
            <person name="Mar Alba M."/>
            <person name="Abril J.F."/>
            <person name="Guigo R."/>
            <person name="Smit A."/>
            <person name="Dubchak I."/>
            <person name="Rubin E.M."/>
            <person name="Couronne O."/>
            <person name="Poliakov A."/>
            <person name="Huebner N."/>
            <person name="Ganten D."/>
            <person name="Goesele C."/>
            <person name="Hummel O."/>
            <person name="Kreitler T."/>
            <person name="Lee Y.-A."/>
            <person name="Monti J."/>
            <person name="Schulz H."/>
            <person name="Zimdahl H."/>
            <person name="Himmelbauer H."/>
            <person name="Lehrach H."/>
            <person name="Jacob H.J."/>
            <person name="Bromberg S."/>
            <person name="Gullings-Handley J."/>
            <person name="Jensen-Seaman M.I."/>
            <person name="Kwitek A.E."/>
            <person name="Lazar J."/>
            <person name="Pasko D."/>
            <person name="Tonellato P.J."/>
            <person name="Twigger S."/>
            <person name="Ponting C.P."/>
            <person name="Duarte J.M."/>
            <person name="Rice S."/>
            <person name="Goodstadt L."/>
            <person name="Beatson S.A."/>
            <person name="Emes R.D."/>
            <person name="Winter E.E."/>
            <person name="Webber C."/>
            <person name="Brandt P."/>
            <person name="Nyakatura G."/>
            <person name="Adetobi M."/>
            <person name="Chiaromonte F."/>
            <person name="Elnitski L."/>
            <person name="Eswara P."/>
            <person name="Hardison R.C."/>
            <person name="Hou M."/>
            <person name="Kolbe D."/>
            <person name="Makova K."/>
            <person name="Miller W."/>
            <person name="Nekrutenko A."/>
            <person name="Riemer C."/>
            <person name="Schwartz S."/>
            <person name="Taylor J."/>
            <person name="Yang S."/>
            <person name="Zhang Y."/>
            <person name="Lindpaintner K."/>
            <person name="Andrews T.D."/>
            <person name="Caccamo M."/>
            <person name="Clamp M."/>
            <person name="Clarke L."/>
            <person name="Curwen V."/>
            <person name="Durbin R.M."/>
            <person name="Eyras E."/>
            <person name="Searle S.M."/>
            <person name="Cooper G.M."/>
            <person name="Batzoglou S."/>
            <person name="Brudno M."/>
            <person name="Sidow A."/>
            <person name="Stone E.A."/>
            <person name="Payseur B.A."/>
            <person name="Bourque G."/>
            <person name="Lopez-Otin C."/>
            <person name="Puente X.S."/>
            <person name="Chakrabarti K."/>
            <person name="Chatterji S."/>
            <person name="Dewey C."/>
            <person name="Pachter L."/>
            <person name="Bray N."/>
            <person name="Yap V.B."/>
            <person name="Caspi A."/>
            <person name="Tesler G."/>
            <person name="Pevzner P.A."/>
            <person name="Haussler D."/>
            <person name="Roskin K.M."/>
            <person name="Baertsch R."/>
            <person name="Clawson H."/>
            <person name="Furey T.S."/>
            <person name="Hinrichs A.S."/>
            <person name="Karolchik D."/>
            <person name="Kent W.J."/>
            <person name="Rosenbloom K.R."/>
            <person name="Trumbower H."/>
            <person name="Weirauch M."/>
            <person name="Cooper D.N."/>
            <person name="Stenson P.D."/>
            <person name="Ma B."/>
            <person name="Brent M."/>
            <person name="Arumugam M."/>
            <person name="Shteynberg D."/>
            <person name="Copley R.R."/>
            <person name="Taylor M.S."/>
            <person name="Riethman H."/>
            <person name="Mudunuri U."/>
            <person name="Peterson J."/>
            <person name="Guyer M."/>
            <person name="Felsenfeld A."/>
            <person name="Old S."/>
            <person name="Mockrin S."/>
            <person name="Collins F.S."/>
        </authorList>
    </citation>
    <scope>NUCLEOTIDE SEQUENCE [LARGE SCALE GENOMIC DNA]</scope>
    <source>
        <strain>Brown Norway</strain>
    </source>
</reference>
<dbReference type="EMBL" id="M64386">
    <property type="protein sequence ID" value="AAA41749.1"/>
    <property type="molecule type" value="mRNA"/>
</dbReference>
<dbReference type="EMBL" id="AABR03000863">
    <property type="status" value="NOT_ANNOTATED_CDS"/>
    <property type="molecule type" value="Genomic_DNA"/>
</dbReference>
<dbReference type="PIR" id="F23701">
    <property type="entry name" value="F23701"/>
</dbReference>
<dbReference type="RefSeq" id="NP_113898.1">
    <property type="nucleotide sequence ID" value="NM_031710.1"/>
</dbReference>
<dbReference type="RefSeq" id="XP_006230024.1">
    <property type="nucleotide sequence ID" value="XM_006229962.1"/>
</dbReference>
<dbReference type="RefSeq" id="XP_017443393.1">
    <property type="nucleotide sequence ID" value="XM_017587904.1"/>
</dbReference>
<dbReference type="SMR" id="P23270"/>
<dbReference type="FunCoup" id="P23270">
    <property type="interactions" value="1007"/>
</dbReference>
<dbReference type="STRING" id="10116.ENSRNOP00000048551"/>
<dbReference type="GlyCosmos" id="P23270">
    <property type="glycosylation" value="1 site, No reported glycans"/>
</dbReference>
<dbReference type="GlyGen" id="P23270">
    <property type="glycosylation" value="1 site"/>
</dbReference>
<dbReference type="PaxDb" id="10116-ENSRNOP00000048551"/>
<dbReference type="GeneID" id="65140"/>
<dbReference type="KEGG" id="rno:65140"/>
<dbReference type="UCSC" id="RGD:68340">
    <property type="organism name" value="rat"/>
</dbReference>
<dbReference type="AGR" id="RGD:68340"/>
<dbReference type="CTD" id="8590"/>
<dbReference type="RGD" id="68340">
    <property type="gene designation" value="Olr226"/>
</dbReference>
<dbReference type="eggNOG" id="ENOG502QVH7">
    <property type="taxonomic scope" value="Eukaryota"/>
</dbReference>
<dbReference type="HOGENOM" id="CLU_012526_1_2_1"/>
<dbReference type="InParanoid" id="P23270"/>
<dbReference type="PhylomeDB" id="P23270"/>
<dbReference type="TreeFam" id="TF337475"/>
<dbReference type="PRO" id="PR:P23270"/>
<dbReference type="Proteomes" id="UP000002494">
    <property type="component" value="Chromosome 1"/>
</dbReference>
<dbReference type="GO" id="GO:0005886">
    <property type="term" value="C:plasma membrane"/>
    <property type="evidence" value="ECO:0000318"/>
    <property type="project" value="GO_Central"/>
</dbReference>
<dbReference type="GO" id="GO:0004930">
    <property type="term" value="F:G protein-coupled receptor activity"/>
    <property type="evidence" value="ECO:0007669"/>
    <property type="project" value="UniProtKB-KW"/>
</dbReference>
<dbReference type="GO" id="GO:0004984">
    <property type="term" value="F:olfactory receptor activity"/>
    <property type="evidence" value="ECO:0000318"/>
    <property type="project" value="GO_Central"/>
</dbReference>
<dbReference type="GO" id="GO:0050911">
    <property type="term" value="P:detection of chemical stimulus involved in sensory perception of smell"/>
    <property type="evidence" value="ECO:0000318"/>
    <property type="project" value="GO_Central"/>
</dbReference>
<dbReference type="CDD" id="cd15224">
    <property type="entry name" value="7tmA_OR6B-like"/>
    <property type="match status" value="1"/>
</dbReference>
<dbReference type="FunFam" id="1.10.1220.70:FF:000001">
    <property type="entry name" value="Olfactory receptor"/>
    <property type="match status" value="1"/>
</dbReference>
<dbReference type="FunFam" id="1.20.1070.10:FF:000001">
    <property type="entry name" value="Olfactory receptor"/>
    <property type="match status" value="1"/>
</dbReference>
<dbReference type="Gene3D" id="1.20.1070.10">
    <property type="entry name" value="Rhodopsin 7-helix transmembrane proteins"/>
    <property type="match status" value="1"/>
</dbReference>
<dbReference type="InterPro" id="IPR000276">
    <property type="entry name" value="GPCR_Rhodpsn"/>
</dbReference>
<dbReference type="InterPro" id="IPR017452">
    <property type="entry name" value="GPCR_Rhodpsn_7TM"/>
</dbReference>
<dbReference type="InterPro" id="IPR000725">
    <property type="entry name" value="Olfact_rcpt"/>
</dbReference>
<dbReference type="InterPro" id="IPR050939">
    <property type="entry name" value="Olfactory_GPCR1"/>
</dbReference>
<dbReference type="PANTHER" id="PTHR24242">
    <property type="entry name" value="G-PROTEIN COUPLED RECEPTOR"/>
    <property type="match status" value="1"/>
</dbReference>
<dbReference type="PANTHER" id="PTHR24242:SF359">
    <property type="entry name" value="ODORANT RECEPTOR-RELATED"/>
    <property type="match status" value="1"/>
</dbReference>
<dbReference type="Pfam" id="PF13853">
    <property type="entry name" value="7tm_4"/>
    <property type="match status" value="1"/>
</dbReference>
<dbReference type="PRINTS" id="PR00237">
    <property type="entry name" value="GPCRRHODOPSN"/>
</dbReference>
<dbReference type="PRINTS" id="PR00245">
    <property type="entry name" value="OLFACTORYR"/>
</dbReference>
<dbReference type="SUPFAM" id="SSF81321">
    <property type="entry name" value="Family A G protein-coupled receptor-like"/>
    <property type="match status" value="1"/>
</dbReference>
<dbReference type="PROSITE" id="PS00237">
    <property type="entry name" value="G_PROTEIN_RECEP_F1_1"/>
    <property type="match status" value="1"/>
</dbReference>
<dbReference type="PROSITE" id="PS50262">
    <property type="entry name" value="G_PROTEIN_RECEP_F1_2"/>
    <property type="match status" value="1"/>
</dbReference>
<feature type="chain" id="PRO_0000150870" description="Olfactory receptor 226">
    <location>
        <begin position="1"/>
        <end position="327"/>
    </location>
</feature>
<feature type="topological domain" description="Extracellular" evidence="1">
    <location>
        <begin position="1"/>
        <end position="26"/>
    </location>
</feature>
<feature type="transmembrane region" description="Helical; Name=1" evidence="1">
    <location>
        <begin position="27"/>
        <end position="50"/>
    </location>
</feature>
<feature type="topological domain" description="Cytoplasmic" evidence="1">
    <location>
        <begin position="51"/>
        <end position="58"/>
    </location>
</feature>
<feature type="transmembrane region" description="Helical; Name=2" evidence="1">
    <location>
        <begin position="59"/>
        <end position="80"/>
    </location>
</feature>
<feature type="topological domain" description="Extracellular" evidence="1">
    <location>
        <begin position="81"/>
        <end position="104"/>
    </location>
</feature>
<feature type="transmembrane region" description="Helical; Name=3" evidence="1">
    <location>
        <begin position="105"/>
        <end position="125"/>
    </location>
</feature>
<feature type="topological domain" description="Cytoplasmic" evidence="1">
    <location>
        <begin position="126"/>
        <end position="144"/>
    </location>
</feature>
<feature type="transmembrane region" description="Helical; Name=4" evidence="1">
    <location>
        <begin position="145"/>
        <end position="163"/>
    </location>
</feature>
<feature type="topological domain" description="Extracellular" evidence="1">
    <location>
        <begin position="164"/>
        <end position="201"/>
    </location>
</feature>
<feature type="transmembrane region" description="Helical; Name=5" evidence="1">
    <location>
        <begin position="202"/>
        <end position="224"/>
    </location>
</feature>
<feature type="topological domain" description="Cytoplasmic" evidence="1">
    <location>
        <begin position="225"/>
        <end position="241"/>
    </location>
</feature>
<feature type="transmembrane region" description="Helical; Name=6" evidence="1">
    <location>
        <begin position="242"/>
        <end position="265"/>
    </location>
</feature>
<feature type="topological domain" description="Extracellular" evidence="1">
    <location>
        <begin position="266"/>
        <end position="277"/>
    </location>
</feature>
<feature type="transmembrane region" description="Helical; Name=7" evidence="1">
    <location>
        <begin position="278"/>
        <end position="297"/>
    </location>
</feature>
<feature type="topological domain" description="Cytoplasmic" evidence="1">
    <location>
        <begin position="298"/>
        <end position="327"/>
    </location>
</feature>
<feature type="glycosylation site" description="N-linked (GlcNAc...) asparagine" evidence="1">
    <location>
        <position position="5"/>
    </location>
</feature>
<feature type="disulfide bond" evidence="2">
    <location>
        <begin position="102"/>
        <end position="194"/>
    </location>
</feature>
<feature type="sequence conflict" description="In Ref. 1; AAA41749." evidence="3" ref="1">
    <original>N</original>
    <variation>I</variation>
    <location>
        <position position="326"/>
    </location>
</feature>
<proteinExistence type="evidence at transcript level"/>